<keyword id="KW-0004">4Fe-4S</keyword>
<keyword id="KW-0028">Amino-acid biosynthesis</keyword>
<keyword id="KW-0100">Branched-chain amino acid biosynthesis</keyword>
<keyword id="KW-0408">Iron</keyword>
<keyword id="KW-0411">Iron-sulfur</keyword>
<keyword id="KW-0432">Leucine biosynthesis</keyword>
<keyword id="KW-0456">Lyase</keyword>
<keyword id="KW-0479">Metal-binding</keyword>
<comment type="function">
    <text evidence="1">Catalyzes the isomerization between 2-isopropylmalate and 3-isopropylmalate, via the formation of 2-isopropylmaleate.</text>
</comment>
<comment type="catalytic activity">
    <reaction evidence="1">
        <text>(2R,3S)-3-isopropylmalate = (2S)-2-isopropylmalate</text>
        <dbReference type="Rhea" id="RHEA:32287"/>
        <dbReference type="ChEBI" id="CHEBI:1178"/>
        <dbReference type="ChEBI" id="CHEBI:35121"/>
        <dbReference type="EC" id="4.2.1.33"/>
    </reaction>
</comment>
<comment type="cofactor">
    <cofactor evidence="1">
        <name>[4Fe-4S] cluster</name>
        <dbReference type="ChEBI" id="CHEBI:49883"/>
    </cofactor>
    <text evidence="1">Binds 1 [4Fe-4S] cluster per subunit.</text>
</comment>
<comment type="pathway">
    <text evidence="1">Amino-acid biosynthesis; L-leucine biosynthesis; L-leucine from 3-methyl-2-oxobutanoate: step 2/4.</text>
</comment>
<comment type="subunit">
    <text evidence="1">Heterodimer of LeuC and LeuD.</text>
</comment>
<comment type="similarity">
    <text evidence="1">Belongs to the aconitase/IPM isomerase family. LeuC type 1 subfamily.</text>
</comment>
<gene>
    <name evidence="1" type="primary">leuC</name>
    <name type="ordered locus">Lferr_0775</name>
</gene>
<accession>B5ENJ1</accession>
<evidence type="ECO:0000255" key="1">
    <source>
        <dbReference type="HAMAP-Rule" id="MF_01026"/>
    </source>
</evidence>
<protein>
    <recommendedName>
        <fullName evidence="1">3-isopropylmalate dehydratase large subunit</fullName>
        <ecNumber evidence="1">4.2.1.33</ecNumber>
    </recommendedName>
    <alternativeName>
        <fullName evidence="1">Alpha-IPM isomerase</fullName>
        <shortName evidence="1">IPMI</shortName>
    </alternativeName>
    <alternativeName>
        <fullName evidence="1">Isopropylmalate isomerase</fullName>
    </alternativeName>
</protein>
<organism>
    <name type="scientific">Acidithiobacillus ferrooxidans (strain ATCC 53993 / BNL-5-31)</name>
    <name type="common">Leptospirillum ferrooxidans (ATCC 53993)</name>
    <dbReference type="NCBI Taxonomy" id="380394"/>
    <lineage>
        <taxon>Bacteria</taxon>
        <taxon>Pseudomonadati</taxon>
        <taxon>Pseudomonadota</taxon>
        <taxon>Acidithiobacillia</taxon>
        <taxon>Acidithiobacillales</taxon>
        <taxon>Acidithiobacillaceae</taxon>
        <taxon>Acidithiobacillus</taxon>
    </lineage>
</organism>
<reference key="1">
    <citation type="submission" date="2008-08" db="EMBL/GenBank/DDBJ databases">
        <title>Complete sequence of Acidithiobacillus ferrooxidans ATCC 53993.</title>
        <authorList>
            <person name="Lucas S."/>
            <person name="Copeland A."/>
            <person name="Lapidus A."/>
            <person name="Glavina del Rio T."/>
            <person name="Dalin E."/>
            <person name="Tice H."/>
            <person name="Bruce D."/>
            <person name="Goodwin L."/>
            <person name="Pitluck S."/>
            <person name="Sims D."/>
            <person name="Brettin T."/>
            <person name="Detter J.C."/>
            <person name="Han C."/>
            <person name="Kuske C.R."/>
            <person name="Larimer F."/>
            <person name="Land M."/>
            <person name="Hauser L."/>
            <person name="Kyrpides N."/>
            <person name="Lykidis A."/>
            <person name="Borole A.P."/>
        </authorList>
    </citation>
    <scope>NUCLEOTIDE SEQUENCE [LARGE SCALE GENOMIC DNA]</scope>
    <source>
        <strain>ATCC 53993 / BNL-5-31</strain>
    </source>
</reference>
<proteinExistence type="inferred from homology"/>
<sequence length="470" mass="50109">MSAKTLYDKLWESHVVHTEQDGGVLLYIDRQLLHEVTSPQAFSGLRAAGRKAWRIDANIATADHNVPTTDRAAGIADATSRLQVDTLDRNCAEFGIEEFGMHDKRQGIVHVIAPEQGLTLPGMTVVCGDSHTATHGALGALAFGIGTTEVEHVLATQCLWARKSRSMRIWVEGELGNGVTAKDLVLAIIGRIGTAGGTGYAIEFAGPAVHALSVEGRMTLCNMAIEAGARSGMVGVDAVTIDYLRGRPYAPVGKIWDQAVAVWGELHSDPDAQFDAEIRLEATDVAPQVTWGTSPEMVVDISARVPDPALEKDPVRRKGWSDALAYMDLAAATPISSIALDKVFIGSCTNARIEDLRAAAAVARGHHKAASVKAVLVVPGSGLVKAQAEAEGLDRIFRDAGFEWREPGCSMCLAMNADRLEPGERCASTSNRNFEGRQGAGGRTHLVSPAMAAAAAIAGHFVDVRDWIMH</sequence>
<name>LEUC_ACIF5</name>
<dbReference type="EC" id="4.2.1.33" evidence="1"/>
<dbReference type="EMBL" id="CP001132">
    <property type="protein sequence ID" value="ACH83025.1"/>
    <property type="molecule type" value="Genomic_DNA"/>
</dbReference>
<dbReference type="RefSeq" id="WP_012536243.1">
    <property type="nucleotide sequence ID" value="NC_011206.1"/>
</dbReference>
<dbReference type="SMR" id="B5ENJ1"/>
<dbReference type="GeneID" id="65279976"/>
<dbReference type="KEGG" id="afe:Lferr_0775"/>
<dbReference type="eggNOG" id="COG0065">
    <property type="taxonomic scope" value="Bacteria"/>
</dbReference>
<dbReference type="HOGENOM" id="CLU_006714_3_4_6"/>
<dbReference type="UniPathway" id="UPA00048">
    <property type="reaction ID" value="UER00071"/>
</dbReference>
<dbReference type="GO" id="GO:0003861">
    <property type="term" value="F:3-isopropylmalate dehydratase activity"/>
    <property type="evidence" value="ECO:0007669"/>
    <property type="project" value="UniProtKB-UniRule"/>
</dbReference>
<dbReference type="GO" id="GO:0051539">
    <property type="term" value="F:4 iron, 4 sulfur cluster binding"/>
    <property type="evidence" value="ECO:0007669"/>
    <property type="project" value="UniProtKB-KW"/>
</dbReference>
<dbReference type="GO" id="GO:0046872">
    <property type="term" value="F:metal ion binding"/>
    <property type="evidence" value="ECO:0007669"/>
    <property type="project" value="UniProtKB-KW"/>
</dbReference>
<dbReference type="GO" id="GO:0009098">
    <property type="term" value="P:L-leucine biosynthetic process"/>
    <property type="evidence" value="ECO:0007669"/>
    <property type="project" value="UniProtKB-UniRule"/>
</dbReference>
<dbReference type="CDD" id="cd01583">
    <property type="entry name" value="IPMI"/>
    <property type="match status" value="1"/>
</dbReference>
<dbReference type="FunFam" id="3.30.499.10:FF:000007">
    <property type="entry name" value="3-isopropylmalate dehydratase large subunit"/>
    <property type="match status" value="1"/>
</dbReference>
<dbReference type="Gene3D" id="3.30.499.10">
    <property type="entry name" value="Aconitase, domain 3"/>
    <property type="match status" value="2"/>
</dbReference>
<dbReference type="HAMAP" id="MF_01026">
    <property type="entry name" value="LeuC_type1"/>
    <property type="match status" value="1"/>
</dbReference>
<dbReference type="InterPro" id="IPR004430">
    <property type="entry name" value="3-IsopropMal_deHydase_lsu"/>
</dbReference>
<dbReference type="InterPro" id="IPR015931">
    <property type="entry name" value="Acnase/IPM_dHydase_lsu_aba_1/3"/>
</dbReference>
<dbReference type="InterPro" id="IPR001030">
    <property type="entry name" value="Acoase/IPM_deHydtase_lsu_aba"/>
</dbReference>
<dbReference type="InterPro" id="IPR018136">
    <property type="entry name" value="Aconitase_4Fe-4S_BS"/>
</dbReference>
<dbReference type="InterPro" id="IPR036008">
    <property type="entry name" value="Aconitase_4Fe-4S_dom"/>
</dbReference>
<dbReference type="InterPro" id="IPR050067">
    <property type="entry name" value="IPM_dehydratase_rel_enz"/>
</dbReference>
<dbReference type="InterPro" id="IPR033941">
    <property type="entry name" value="IPMI_cat"/>
</dbReference>
<dbReference type="NCBIfam" id="TIGR00170">
    <property type="entry name" value="leuC"/>
    <property type="match status" value="1"/>
</dbReference>
<dbReference type="NCBIfam" id="NF004016">
    <property type="entry name" value="PRK05478.1"/>
    <property type="match status" value="1"/>
</dbReference>
<dbReference type="NCBIfam" id="NF009116">
    <property type="entry name" value="PRK12466.1"/>
    <property type="match status" value="1"/>
</dbReference>
<dbReference type="PANTHER" id="PTHR43822:SF9">
    <property type="entry name" value="3-ISOPROPYLMALATE DEHYDRATASE"/>
    <property type="match status" value="1"/>
</dbReference>
<dbReference type="PANTHER" id="PTHR43822">
    <property type="entry name" value="HOMOACONITASE, MITOCHONDRIAL-RELATED"/>
    <property type="match status" value="1"/>
</dbReference>
<dbReference type="Pfam" id="PF00330">
    <property type="entry name" value="Aconitase"/>
    <property type="match status" value="1"/>
</dbReference>
<dbReference type="PRINTS" id="PR00415">
    <property type="entry name" value="ACONITASE"/>
</dbReference>
<dbReference type="SUPFAM" id="SSF53732">
    <property type="entry name" value="Aconitase iron-sulfur domain"/>
    <property type="match status" value="1"/>
</dbReference>
<dbReference type="PROSITE" id="PS00450">
    <property type="entry name" value="ACONITASE_1"/>
    <property type="match status" value="1"/>
</dbReference>
<dbReference type="PROSITE" id="PS01244">
    <property type="entry name" value="ACONITASE_2"/>
    <property type="match status" value="1"/>
</dbReference>
<feature type="chain" id="PRO_1000135658" description="3-isopropylmalate dehydratase large subunit">
    <location>
        <begin position="1"/>
        <end position="470"/>
    </location>
</feature>
<feature type="binding site" evidence="1">
    <location>
        <position position="348"/>
    </location>
    <ligand>
        <name>[4Fe-4S] cluster</name>
        <dbReference type="ChEBI" id="CHEBI:49883"/>
    </ligand>
</feature>
<feature type="binding site" evidence="1">
    <location>
        <position position="409"/>
    </location>
    <ligand>
        <name>[4Fe-4S] cluster</name>
        <dbReference type="ChEBI" id="CHEBI:49883"/>
    </ligand>
</feature>
<feature type="binding site" evidence="1">
    <location>
        <position position="412"/>
    </location>
    <ligand>
        <name>[4Fe-4S] cluster</name>
        <dbReference type="ChEBI" id="CHEBI:49883"/>
    </ligand>
</feature>